<keyword id="KW-1185">Reference proteome</keyword>
<keyword id="KW-0964">Secreted</keyword>
<keyword id="KW-0732">Signal</keyword>
<reference key="1">
    <citation type="journal article" date="1990" name="Development">
        <title>Localization of specific mRNAs in Xenopus embryos by whole-mount in situ hybridization.</title>
        <authorList>
            <person name="Hemmati-Brivanlou A."/>
            <person name="Frank D."/>
            <person name="Bolce M.E."/>
            <person name="Brown B.D."/>
            <person name="Sive H.L."/>
            <person name="Harland R.M."/>
        </authorList>
    </citation>
    <scope>NUCLEOTIDE SEQUENCE [MRNA]</scope>
</reference>
<feature type="signal peptide">
    <location>
        <begin position="1"/>
        <end position="18"/>
    </location>
</feature>
<feature type="chain" id="PRO_0000022691" description="Protein XA-1">
    <location>
        <begin position="19"/>
        <end position="198"/>
    </location>
</feature>
<feature type="region of interest" description="Disordered" evidence="1">
    <location>
        <begin position="17"/>
        <end position="198"/>
    </location>
</feature>
<feature type="compositionally biased region" description="Pro residues" evidence="1">
    <location>
        <begin position="29"/>
        <end position="44"/>
    </location>
</feature>
<feature type="compositionally biased region" description="Basic and acidic residues" evidence="1">
    <location>
        <begin position="46"/>
        <end position="59"/>
    </location>
</feature>
<feature type="compositionally biased region" description="Basic residues" evidence="1">
    <location>
        <begin position="76"/>
        <end position="86"/>
    </location>
</feature>
<feature type="compositionally biased region" description="Basic and acidic residues" evidence="1">
    <location>
        <begin position="95"/>
        <end position="104"/>
    </location>
</feature>
<feature type="compositionally biased region" description="Basic residues" evidence="1">
    <location>
        <begin position="134"/>
        <end position="145"/>
    </location>
</feature>
<feature type="compositionally biased region" description="Basic and acidic residues" evidence="1">
    <location>
        <begin position="181"/>
        <end position="198"/>
    </location>
</feature>
<sequence>MFFYVLLLALMAQGWSLPQGKTGEDSPVFRPPSPPMGPSLPPPVSHDLHRPSGHPEEFRTGASLPPKETPNEPRHGRPKRDLHHGKVVPTGVPHHTGEVLHHTDCSSNTHKSHEENRPKGFRTGRPLLPIKPEHGRHRRDLHHGKAVPTGVPHHTEKFHNGSNGKSHPPRPGHSTSAHNDNSSEEKRPKHGQEQGKKH</sequence>
<protein>
    <recommendedName>
        <fullName>Protein XA-1</fullName>
    </recommendedName>
</protein>
<evidence type="ECO:0000256" key="1">
    <source>
        <dbReference type="SAM" id="MobiDB-lite"/>
    </source>
</evidence>
<evidence type="ECO:0000305" key="2"/>
<proteinExistence type="evidence at transcript level"/>
<organism>
    <name type="scientific">Xenopus laevis</name>
    <name type="common">African clawed frog</name>
    <dbReference type="NCBI Taxonomy" id="8355"/>
    <lineage>
        <taxon>Eukaryota</taxon>
        <taxon>Metazoa</taxon>
        <taxon>Chordata</taxon>
        <taxon>Craniata</taxon>
        <taxon>Vertebrata</taxon>
        <taxon>Euteleostomi</taxon>
        <taxon>Amphibia</taxon>
        <taxon>Batrachia</taxon>
        <taxon>Anura</taxon>
        <taxon>Pipoidea</taxon>
        <taxon>Pipidae</taxon>
        <taxon>Xenopodinae</taxon>
        <taxon>Xenopus</taxon>
        <taxon>Xenopus</taxon>
    </lineage>
</organism>
<comment type="subcellular location">
    <subcellularLocation>
        <location evidence="2">Secreted</location>
    </subcellularLocation>
</comment>
<comment type="tissue specificity">
    <text>Expressed in the periphery of the cement gland as well as in the region of the hatching gland.</text>
</comment>
<name>XA1_XENLA</name>
<accession>P23507</accession>
<dbReference type="EMBL" id="X53821">
    <property type="protein sequence ID" value="CAA37818.1"/>
    <property type="molecule type" value="mRNA"/>
</dbReference>
<dbReference type="PIR" id="S14456">
    <property type="entry name" value="S14456"/>
</dbReference>
<dbReference type="RefSeq" id="NP_001095221.1">
    <property type="nucleotide sequence ID" value="NM_001101751.1"/>
</dbReference>
<dbReference type="GeneID" id="394411"/>
<dbReference type="KEGG" id="xla:394411"/>
<dbReference type="AGR" id="Xenbase:XB-GENE-6254220"/>
<dbReference type="CTD" id="394411"/>
<dbReference type="Xenbase" id="XB-GENE-6254220">
    <property type="gene designation" value="xa-1.L"/>
</dbReference>
<dbReference type="OrthoDB" id="10476859at2759"/>
<dbReference type="Proteomes" id="UP000186698">
    <property type="component" value="Chromosome 7L"/>
</dbReference>
<dbReference type="Bgee" id="394411">
    <property type="expression patterns" value="Expressed in neurula embryo and 5 other cell types or tissues"/>
</dbReference>
<dbReference type="GO" id="GO:0005576">
    <property type="term" value="C:extracellular region"/>
    <property type="evidence" value="ECO:0007669"/>
    <property type="project" value="UniProtKB-SubCell"/>
</dbReference>